<comment type="function">
    <text evidence="1">NDH-1 shuttles electrons from NADH, via FMN and iron-sulfur (Fe-S) centers, to quinones in the respiratory chain. The immediate electron acceptor for the enzyme in this species is believed to be ubiquinone. Couples the redox reaction to proton translocation (for every two electrons transferred, four hydrogen ions are translocated across the cytoplasmic membrane), and thus conserves the redox energy in a proton gradient. This subunit may bind ubiquinone.</text>
</comment>
<comment type="catalytic activity">
    <reaction evidence="1">
        <text>a quinone + NADH + 5 H(+)(in) = a quinol + NAD(+) + 4 H(+)(out)</text>
        <dbReference type="Rhea" id="RHEA:57888"/>
        <dbReference type="ChEBI" id="CHEBI:15378"/>
        <dbReference type="ChEBI" id="CHEBI:24646"/>
        <dbReference type="ChEBI" id="CHEBI:57540"/>
        <dbReference type="ChEBI" id="CHEBI:57945"/>
        <dbReference type="ChEBI" id="CHEBI:132124"/>
    </reaction>
</comment>
<comment type="subunit">
    <text evidence="1">NDH-1 is composed of 14 different subunits. Subunits NuoA, H, J, K, L, M, N constitute the membrane sector of the complex.</text>
</comment>
<comment type="subcellular location">
    <subcellularLocation>
        <location evidence="1">Cell inner membrane</location>
        <topology evidence="1">Multi-pass membrane protein</topology>
    </subcellularLocation>
</comment>
<comment type="similarity">
    <text evidence="1">Belongs to the complex I subunit 1 family.</text>
</comment>
<name>NUOH_PSYWF</name>
<reference key="1">
    <citation type="submission" date="2007-05" db="EMBL/GenBank/DDBJ databases">
        <title>Complete sequence of chromosome of Psychrobacter sp. PRwf-1.</title>
        <authorList>
            <consortium name="US DOE Joint Genome Institute"/>
            <person name="Copeland A."/>
            <person name="Lucas S."/>
            <person name="Lapidus A."/>
            <person name="Barry K."/>
            <person name="Detter J.C."/>
            <person name="Glavina del Rio T."/>
            <person name="Hammon N."/>
            <person name="Israni S."/>
            <person name="Dalin E."/>
            <person name="Tice H."/>
            <person name="Pitluck S."/>
            <person name="Chain P."/>
            <person name="Malfatti S."/>
            <person name="Shin M."/>
            <person name="Vergez L."/>
            <person name="Schmutz J."/>
            <person name="Larimer F."/>
            <person name="Land M."/>
            <person name="Hauser L."/>
            <person name="Kyrpides N."/>
            <person name="Kim E."/>
            <person name="Tiedje J."/>
            <person name="Richardson P."/>
        </authorList>
    </citation>
    <scope>NUCLEOTIDE SEQUENCE [LARGE SCALE GENOMIC DNA]</scope>
    <source>
        <strain>PRwf-1</strain>
    </source>
</reference>
<sequence length="348" mass="38971">MESIRIIPEVPSFLNQVLSVDAWNILFLVGQALVIFLVVVIVAALMIIYERRMLALWQDRYGPNRVGPWGSLQLVADMLKIFFKEDWTPKFADKFMFILAPAVAMFTALASFAIIPVSPMLGVADWNIGILFFFAMAGMAVYAVMFGGWASQNKYSLLGGLRSAAQTISYEVFLGLSLMGVVAMTGSFNLRDIVVAQQGGFWHWNIFPQFLGFLTFVVAGVAVTHRHPFDQPEAEQELAEGYHVEYSGMKFGMFFIGEYVNVVLISALMTCLFFGGWDAPLNLGFTILPPAFWFMIKTLFFMTMFVLARGSLMRPRYDQVMNFGWKVCLPVTLINLMITAALILISAA</sequence>
<accession>A5WG42</accession>
<protein>
    <recommendedName>
        <fullName evidence="1">NADH-quinone oxidoreductase subunit H</fullName>
        <ecNumber evidence="1">7.1.1.-</ecNumber>
    </recommendedName>
    <alternativeName>
        <fullName evidence="1">NADH dehydrogenase I subunit H</fullName>
    </alternativeName>
    <alternativeName>
        <fullName evidence="1">NDH-1 subunit H</fullName>
    </alternativeName>
</protein>
<gene>
    <name evidence="1" type="primary">nuoH</name>
    <name type="ordered locus">PsycPRwf_1693</name>
</gene>
<organism>
    <name type="scientific">Psychrobacter sp. (strain PRwf-1)</name>
    <dbReference type="NCBI Taxonomy" id="349106"/>
    <lineage>
        <taxon>Bacteria</taxon>
        <taxon>Pseudomonadati</taxon>
        <taxon>Pseudomonadota</taxon>
        <taxon>Gammaproteobacteria</taxon>
        <taxon>Moraxellales</taxon>
        <taxon>Moraxellaceae</taxon>
        <taxon>Psychrobacter</taxon>
    </lineage>
</organism>
<dbReference type="EC" id="7.1.1.-" evidence="1"/>
<dbReference type="EMBL" id="CP000713">
    <property type="protein sequence ID" value="ABQ94633.1"/>
    <property type="molecule type" value="Genomic_DNA"/>
</dbReference>
<dbReference type="SMR" id="A5WG42"/>
<dbReference type="STRING" id="349106.PsycPRwf_1693"/>
<dbReference type="KEGG" id="prw:PsycPRwf_1693"/>
<dbReference type="eggNOG" id="COG1005">
    <property type="taxonomic scope" value="Bacteria"/>
</dbReference>
<dbReference type="HOGENOM" id="CLU_015134_0_1_6"/>
<dbReference type="GO" id="GO:0005886">
    <property type="term" value="C:plasma membrane"/>
    <property type="evidence" value="ECO:0007669"/>
    <property type="project" value="UniProtKB-SubCell"/>
</dbReference>
<dbReference type="GO" id="GO:0003954">
    <property type="term" value="F:NADH dehydrogenase activity"/>
    <property type="evidence" value="ECO:0007669"/>
    <property type="project" value="TreeGrafter"/>
</dbReference>
<dbReference type="GO" id="GO:0016655">
    <property type="term" value="F:oxidoreductase activity, acting on NAD(P)H, quinone or similar compound as acceptor"/>
    <property type="evidence" value="ECO:0007669"/>
    <property type="project" value="UniProtKB-UniRule"/>
</dbReference>
<dbReference type="GO" id="GO:0048038">
    <property type="term" value="F:quinone binding"/>
    <property type="evidence" value="ECO:0007669"/>
    <property type="project" value="UniProtKB-KW"/>
</dbReference>
<dbReference type="GO" id="GO:0009060">
    <property type="term" value="P:aerobic respiration"/>
    <property type="evidence" value="ECO:0007669"/>
    <property type="project" value="TreeGrafter"/>
</dbReference>
<dbReference type="HAMAP" id="MF_01350">
    <property type="entry name" value="NDH1_NuoH"/>
    <property type="match status" value="1"/>
</dbReference>
<dbReference type="InterPro" id="IPR001694">
    <property type="entry name" value="NADH_UbQ_OxRdtase_su1/FPO"/>
</dbReference>
<dbReference type="InterPro" id="IPR018086">
    <property type="entry name" value="NADH_UbQ_OxRdtase_su1_CS"/>
</dbReference>
<dbReference type="NCBIfam" id="NF004740">
    <property type="entry name" value="PRK06076.1-1"/>
    <property type="match status" value="1"/>
</dbReference>
<dbReference type="NCBIfam" id="NF004741">
    <property type="entry name" value="PRK06076.1-2"/>
    <property type="match status" value="1"/>
</dbReference>
<dbReference type="PANTHER" id="PTHR11432">
    <property type="entry name" value="NADH DEHYDROGENASE SUBUNIT 1"/>
    <property type="match status" value="1"/>
</dbReference>
<dbReference type="PANTHER" id="PTHR11432:SF3">
    <property type="entry name" value="NADH-UBIQUINONE OXIDOREDUCTASE CHAIN 1"/>
    <property type="match status" value="1"/>
</dbReference>
<dbReference type="Pfam" id="PF00146">
    <property type="entry name" value="NADHdh"/>
    <property type="match status" value="1"/>
</dbReference>
<dbReference type="PROSITE" id="PS00667">
    <property type="entry name" value="COMPLEX1_ND1_1"/>
    <property type="match status" value="1"/>
</dbReference>
<dbReference type="PROSITE" id="PS00668">
    <property type="entry name" value="COMPLEX1_ND1_2"/>
    <property type="match status" value="1"/>
</dbReference>
<feature type="chain" id="PRO_1000073375" description="NADH-quinone oxidoreductase subunit H">
    <location>
        <begin position="1"/>
        <end position="348"/>
    </location>
</feature>
<feature type="transmembrane region" description="Helical" evidence="1">
    <location>
        <begin position="25"/>
        <end position="45"/>
    </location>
</feature>
<feature type="transmembrane region" description="Helical" evidence="1">
    <location>
        <begin position="95"/>
        <end position="115"/>
    </location>
</feature>
<feature type="transmembrane region" description="Helical" evidence="1">
    <location>
        <begin position="128"/>
        <end position="148"/>
    </location>
</feature>
<feature type="transmembrane region" description="Helical" evidence="1">
    <location>
        <begin position="168"/>
        <end position="188"/>
    </location>
</feature>
<feature type="transmembrane region" description="Helical" evidence="1">
    <location>
        <begin position="204"/>
        <end position="224"/>
    </location>
</feature>
<feature type="transmembrane region" description="Helical" evidence="1">
    <location>
        <begin position="254"/>
        <end position="274"/>
    </location>
</feature>
<feature type="transmembrane region" description="Helical" evidence="1">
    <location>
        <begin position="287"/>
        <end position="307"/>
    </location>
</feature>
<feature type="transmembrane region" description="Helical" evidence="1">
    <location>
        <begin position="327"/>
        <end position="347"/>
    </location>
</feature>
<keyword id="KW-0997">Cell inner membrane</keyword>
<keyword id="KW-1003">Cell membrane</keyword>
<keyword id="KW-0472">Membrane</keyword>
<keyword id="KW-0520">NAD</keyword>
<keyword id="KW-0874">Quinone</keyword>
<keyword id="KW-1278">Translocase</keyword>
<keyword id="KW-0812">Transmembrane</keyword>
<keyword id="KW-1133">Transmembrane helix</keyword>
<keyword id="KW-0830">Ubiquinone</keyword>
<evidence type="ECO:0000255" key="1">
    <source>
        <dbReference type="HAMAP-Rule" id="MF_01350"/>
    </source>
</evidence>
<proteinExistence type="inferred from homology"/>